<evidence type="ECO:0000250" key="1">
    <source>
        <dbReference type="UniProtKB" id="P0C8E8"/>
    </source>
</evidence>
<evidence type="ECO:0000255" key="2"/>
<evidence type="ECO:0000255" key="3">
    <source>
        <dbReference type="PROSITE-ProRule" id="PRU00498"/>
    </source>
</evidence>
<evidence type="ECO:0000269" key="4">
    <source>
    </source>
</evidence>
<evidence type="ECO:0000303" key="5">
    <source>
    </source>
</evidence>
<evidence type="ECO:0000305" key="6"/>
<evidence type="ECO:0000312" key="7">
    <source>
        <dbReference type="EMBL" id="JAA71238.1"/>
    </source>
</evidence>
<reference evidence="7" key="1">
    <citation type="journal article" date="2013" name="FASEB J.">
        <title>De novo Ixodes ricinus salivary gland transcriptome analysis using two next-generation sequencing methodologies.</title>
        <authorList>
            <person name="Schwarz A."/>
            <person name="von Reumont B.M."/>
            <person name="Erhart J."/>
            <person name="Chagas A.C."/>
            <person name="Ribeiro J.M."/>
            <person name="Kotsyfakis M."/>
        </authorList>
    </citation>
    <scope>NUCLEOTIDE SEQUENCE [LARGE SCALE MRNA]</scope>
    <source>
        <tissue evidence="7">Salivary gland</tissue>
    </source>
</reference>
<reference evidence="6" key="2">
    <citation type="journal article" date="2019" name="J. Biol. Chem.">
        <title>A knottin scaffold directs the CXC-chemokine-binding specificity of tick evasins.</title>
        <authorList>
            <person name="Lee A.W."/>
            <person name="Deruaz M."/>
            <person name="Lynch C."/>
            <person name="Davies G."/>
            <person name="Singh K."/>
            <person name="Alenazi Y."/>
            <person name="Eaton J.R.O."/>
            <person name="Kawamura A."/>
            <person name="Shaw J."/>
            <person name="Proudfoot A.E.I."/>
            <person name="Dias J.M."/>
            <person name="Bhattacharya S."/>
        </authorList>
    </citation>
    <scope>FUNCTION</scope>
</reference>
<proteinExistence type="inferred from homology"/>
<protein>
    <recommendedName>
        <fullName evidence="5">Evasin P1086</fullName>
    </recommendedName>
</protein>
<accession>A0A0K8RK34</accession>
<comment type="function">
    <text evidence="4">Salivary chemokine-binding protein which binds to host chemokines CXCL1, CXCL2, CXCL3, CXCL5, CXCL6, CXCL10, CXCL12 and CXCL13.</text>
</comment>
<comment type="subcellular location">
    <subcellularLocation>
        <location evidence="6">Secreted</location>
    </subcellularLocation>
</comment>
<name>E1086_IXORI</name>
<sequence>MAFNVITFLQLAVFVVILFNINLHSASAGSKGQRASQVSETSITAEFCDTSCTQGTDKTWSGCSGDCFCVHVGNDTEGRCMRWDGDYPSAEEEE</sequence>
<feature type="signal peptide" evidence="2">
    <location>
        <begin position="1"/>
        <end position="28"/>
    </location>
</feature>
<feature type="chain" id="PRO_5005518387" description="Evasin P1086" evidence="2">
    <location>
        <begin position="29"/>
        <end position="94"/>
    </location>
</feature>
<feature type="glycosylation site" description="N-linked (GlcNAc...) asparagine" evidence="3">
    <location>
        <position position="74"/>
    </location>
</feature>
<feature type="disulfide bond" evidence="1">
    <location>
        <begin position="48"/>
        <end position="67"/>
    </location>
</feature>
<feature type="disulfide bond" evidence="1">
    <location>
        <begin position="52"/>
        <end position="69"/>
    </location>
</feature>
<feature type="disulfide bond" evidence="1">
    <location>
        <begin position="63"/>
        <end position="80"/>
    </location>
</feature>
<dbReference type="EMBL" id="GADI01002570">
    <property type="protein sequence ID" value="JAA71238.1"/>
    <property type="molecule type" value="mRNA"/>
</dbReference>
<dbReference type="SMR" id="A0A0K8RK34"/>
<dbReference type="GO" id="GO:0005576">
    <property type="term" value="C:extracellular region"/>
    <property type="evidence" value="ECO:0007669"/>
    <property type="project" value="UniProtKB-SubCell"/>
</dbReference>
<dbReference type="GO" id="GO:0019958">
    <property type="term" value="F:C-X-C chemokine binding"/>
    <property type="evidence" value="ECO:0000314"/>
    <property type="project" value="UniProtKB"/>
</dbReference>
<organism evidence="7">
    <name type="scientific">Ixodes ricinus</name>
    <name type="common">Common tick</name>
    <name type="synonym">Acarus ricinus</name>
    <dbReference type="NCBI Taxonomy" id="34613"/>
    <lineage>
        <taxon>Eukaryota</taxon>
        <taxon>Metazoa</taxon>
        <taxon>Ecdysozoa</taxon>
        <taxon>Arthropoda</taxon>
        <taxon>Chelicerata</taxon>
        <taxon>Arachnida</taxon>
        <taxon>Acari</taxon>
        <taxon>Parasitiformes</taxon>
        <taxon>Ixodida</taxon>
        <taxon>Ixodoidea</taxon>
        <taxon>Ixodidae</taxon>
        <taxon>Ixodinae</taxon>
        <taxon>Ixodes</taxon>
    </lineage>
</organism>
<keyword id="KW-1015">Disulfide bond</keyword>
<keyword id="KW-0325">Glycoprotein</keyword>
<keyword id="KW-0964">Secreted</keyword>
<keyword id="KW-0732">Signal</keyword>